<comment type="function">
    <text evidence="1">This protein is involved in the repair of mismatches in DNA. It is possible that it carries out the mismatch recognition step. This protein has a weak ATPase activity.</text>
</comment>
<comment type="similarity">
    <text evidence="1">Belongs to the DNA mismatch repair MutS family.</text>
</comment>
<evidence type="ECO:0000255" key="1">
    <source>
        <dbReference type="HAMAP-Rule" id="MF_00096"/>
    </source>
</evidence>
<evidence type="ECO:0000256" key="2">
    <source>
        <dbReference type="SAM" id="MobiDB-lite"/>
    </source>
</evidence>
<keyword id="KW-0067">ATP-binding</keyword>
<keyword id="KW-0227">DNA damage</keyword>
<keyword id="KW-0234">DNA repair</keyword>
<keyword id="KW-0238">DNA-binding</keyword>
<keyword id="KW-0547">Nucleotide-binding</keyword>
<accession>Q3ANH5</accession>
<reference key="1">
    <citation type="submission" date="2005-07" db="EMBL/GenBank/DDBJ databases">
        <title>Complete sequence of Synechococcus sp. CC9605.</title>
        <authorList>
            <consortium name="US DOE Joint Genome Institute"/>
            <person name="Copeland A."/>
            <person name="Lucas S."/>
            <person name="Lapidus A."/>
            <person name="Barry K."/>
            <person name="Detter J.C."/>
            <person name="Glavina T."/>
            <person name="Hammon N."/>
            <person name="Israni S."/>
            <person name="Pitluck S."/>
            <person name="Schmutz J."/>
            <person name="Martinez M."/>
            <person name="Larimer F."/>
            <person name="Land M."/>
            <person name="Kyrpides N."/>
            <person name="Ivanova N."/>
            <person name="Richardson P."/>
        </authorList>
    </citation>
    <scope>NUCLEOTIDE SEQUENCE [LARGE SCALE GENOMIC DNA]</scope>
    <source>
        <strain>CC9605</strain>
    </source>
</reference>
<sequence length="903" mass="98353">MPRSASQPPDDALQGNLFGAPEPAAPSATATASEPETASHDLSDDELGADAAARPRTRQATASEGSSEAPAANDSEPSRDEPAWGHHSQLDPLQLTPMLRHYVELKAAHPERVLLYRLGDFFECFFEDAIELSRVLELTLTGKEGGKAIGRVPMAGIPHHAAERYCAELIKQGYSVALCDQLETTPTKGALLKRDITRVLTPGTVLEEGMLSARRNNWLAAVVVEPAQGKQPLRWGLASADVSTGEVQVMQREDSSALHQQLAQQEASELLWAAALDTERPAWCPERLRLTPMASTPFSPVEAERTLQQHYGLSSLDGLGLPEHPLALQALGGLLGYLQDTQPLEEDSRIPLEVPAIVHRGDALVLDAQTRRNLELTATQRDNQLQGSLLWAIDRTLTAMGGRCLRRWLEAPLMDRQAIQQRQDLVSSLVGERSLRLAIRQLLRPMGDLERLAGRAGAGHAGARDLVAIADGLERLPQLTARLKSAISTGPEWLQQLLSPDPALAELARTIRHKLVEAPPLSLSEGDLIHDGVDPLLDGLRNQLDDQDAWLSHQEQQERQRCGISTLKLQHHRTFGYFLAVSKAKATAVPEHWIRRQTLANEERFITPDLKEREGRIFQLRARACQREYELFCQLREQVGAMAAPIRQAARAVAALDALTGLGDVAASGGYCAPTITDGRGLQLEDSRHPVVEQRLVETAFTPNDVQLGEGTDLVVLTGPNASGKSCYLRQIGLIQLMAQIGSWVPARSATVGIADRIFTRVGAVDDLAAGQSTFMVEMAETANILHHASDRSLVLLDEIGRGTATFDGLSIAWAVSEHLAGDLGSRTVFATHYHELNNLAAERDNVANFQVLVEETGEDLVFLHQVQAGGASRSYGIEAARLAGVPKPVVQRARQVLDQLTA</sequence>
<name>MUTS_SYNSC</name>
<protein>
    <recommendedName>
        <fullName evidence="1">DNA mismatch repair protein MutS</fullName>
    </recommendedName>
</protein>
<proteinExistence type="inferred from homology"/>
<organism>
    <name type="scientific">Synechococcus sp. (strain CC9605)</name>
    <dbReference type="NCBI Taxonomy" id="110662"/>
    <lineage>
        <taxon>Bacteria</taxon>
        <taxon>Bacillati</taxon>
        <taxon>Cyanobacteriota</taxon>
        <taxon>Cyanophyceae</taxon>
        <taxon>Synechococcales</taxon>
        <taxon>Synechococcaceae</taxon>
        <taxon>Synechococcus</taxon>
    </lineage>
</organism>
<dbReference type="EMBL" id="CP000110">
    <property type="protein sequence ID" value="ABB33857.1"/>
    <property type="molecule type" value="Genomic_DNA"/>
</dbReference>
<dbReference type="RefSeq" id="WP_011363117.1">
    <property type="nucleotide sequence ID" value="NC_007516.1"/>
</dbReference>
<dbReference type="SMR" id="Q3ANH5"/>
<dbReference type="STRING" id="110662.Syncc9605_0078"/>
<dbReference type="KEGG" id="syd:Syncc9605_0078"/>
<dbReference type="eggNOG" id="COG0249">
    <property type="taxonomic scope" value="Bacteria"/>
</dbReference>
<dbReference type="HOGENOM" id="CLU_002472_3_1_3"/>
<dbReference type="OrthoDB" id="9802448at2"/>
<dbReference type="GO" id="GO:0005829">
    <property type="term" value="C:cytosol"/>
    <property type="evidence" value="ECO:0007669"/>
    <property type="project" value="TreeGrafter"/>
</dbReference>
<dbReference type="GO" id="GO:0005524">
    <property type="term" value="F:ATP binding"/>
    <property type="evidence" value="ECO:0007669"/>
    <property type="project" value="UniProtKB-UniRule"/>
</dbReference>
<dbReference type="GO" id="GO:0140664">
    <property type="term" value="F:ATP-dependent DNA damage sensor activity"/>
    <property type="evidence" value="ECO:0007669"/>
    <property type="project" value="InterPro"/>
</dbReference>
<dbReference type="GO" id="GO:0003684">
    <property type="term" value="F:damaged DNA binding"/>
    <property type="evidence" value="ECO:0007669"/>
    <property type="project" value="UniProtKB-UniRule"/>
</dbReference>
<dbReference type="GO" id="GO:0030983">
    <property type="term" value="F:mismatched DNA binding"/>
    <property type="evidence" value="ECO:0007669"/>
    <property type="project" value="InterPro"/>
</dbReference>
<dbReference type="GO" id="GO:0006298">
    <property type="term" value="P:mismatch repair"/>
    <property type="evidence" value="ECO:0007669"/>
    <property type="project" value="UniProtKB-UniRule"/>
</dbReference>
<dbReference type="CDD" id="cd03284">
    <property type="entry name" value="ABC_MutS1"/>
    <property type="match status" value="1"/>
</dbReference>
<dbReference type="FunFam" id="1.10.1420.10:FF:000001">
    <property type="entry name" value="DNA mismatch repair protein MutS"/>
    <property type="match status" value="1"/>
</dbReference>
<dbReference type="FunFam" id="3.40.50.300:FF:000870">
    <property type="entry name" value="MutS protein homolog 4"/>
    <property type="match status" value="1"/>
</dbReference>
<dbReference type="Gene3D" id="1.10.1420.10">
    <property type="match status" value="2"/>
</dbReference>
<dbReference type="Gene3D" id="3.40.1170.10">
    <property type="entry name" value="DNA repair protein MutS, domain I"/>
    <property type="match status" value="1"/>
</dbReference>
<dbReference type="Gene3D" id="3.30.420.110">
    <property type="entry name" value="MutS, connector domain"/>
    <property type="match status" value="1"/>
</dbReference>
<dbReference type="Gene3D" id="3.40.50.300">
    <property type="entry name" value="P-loop containing nucleotide triphosphate hydrolases"/>
    <property type="match status" value="1"/>
</dbReference>
<dbReference type="HAMAP" id="MF_00096">
    <property type="entry name" value="MutS"/>
    <property type="match status" value="1"/>
</dbReference>
<dbReference type="InterPro" id="IPR005748">
    <property type="entry name" value="DNA_mismatch_repair_MutS"/>
</dbReference>
<dbReference type="InterPro" id="IPR007695">
    <property type="entry name" value="DNA_mismatch_repair_MutS-lik_N"/>
</dbReference>
<dbReference type="InterPro" id="IPR017261">
    <property type="entry name" value="DNA_mismatch_repair_MutS/MSH"/>
</dbReference>
<dbReference type="InterPro" id="IPR000432">
    <property type="entry name" value="DNA_mismatch_repair_MutS_C"/>
</dbReference>
<dbReference type="InterPro" id="IPR007861">
    <property type="entry name" value="DNA_mismatch_repair_MutS_clamp"/>
</dbReference>
<dbReference type="InterPro" id="IPR007696">
    <property type="entry name" value="DNA_mismatch_repair_MutS_core"/>
</dbReference>
<dbReference type="InterPro" id="IPR016151">
    <property type="entry name" value="DNA_mismatch_repair_MutS_N"/>
</dbReference>
<dbReference type="InterPro" id="IPR036187">
    <property type="entry name" value="DNA_mismatch_repair_MutS_sf"/>
</dbReference>
<dbReference type="InterPro" id="IPR007860">
    <property type="entry name" value="DNA_mmatch_repair_MutS_con_dom"/>
</dbReference>
<dbReference type="InterPro" id="IPR045076">
    <property type="entry name" value="MutS"/>
</dbReference>
<dbReference type="InterPro" id="IPR036678">
    <property type="entry name" value="MutS_con_dom_sf"/>
</dbReference>
<dbReference type="InterPro" id="IPR027417">
    <property type="entry name" value="P-loop_NTPase"/>
</dbReference>
<dbReference type="NCBIfam" id="TIGR01070">
    <property type="entry name" value="mutS1"/>
    <property type="match status" value="1"/>
</dbReference>
<dbReference type="NCBIfam" id="NF003810">
    <property type="entry name" value="PRK05399.1"/>
    <property type="match status" value="1"/>
</dbReference>
<dbReference type="PANTHER" id="PTHR11361:SF34">
    <property type="entry name" value="DNA MISMATCH REPAIR PROTEIN MSH1, MITOCHONDRIAL"/>
    <property type="match status" value="1"/>
</dbReference>
<dbReference type="PANTHER" id="PTHR11361">
    <property type="entry name" value="DNA MISMATCH REPAIR PROTEIN MUTS FAMILY MEMBER"/>
    <property type="match status" value="1"/>
</dbReference>
<dbReference type="Pfam" id="PF01624">
    <property type="entry name" value="MutS_I"/>
    <property type="match status" value="1"/>
</dbReference>
<dbReference type="Pfam" id="PF05188">
    <property type="entry name" value="MutS_II"/>
    <property type="match status" value="1"/>
</dbReference>
<dbReference type="Pfam" id="PF05192">
    <property type="entry name" value="MutS_III"/>
    <property type="match status" value="1"/>
</dbReference>
<dbReference type="Pfam" id="PF05190">
    <property type="entry name" value="MutS_IV"/>
    <property type="match status" value="1"/>
</dbReference>
<dbReference type="Pfam" id="PF00488">
    <property type="entry name" value="MutS_V"/>
    <property type="match status" value="1"/>
</dbReference>
<dbReference type="PIRSF" id="PIRSF037677">
    <property type="entry name" value="DNA_mis_repair_Msh6"/>
    <property type="match status" value="1"/>
</dbReference>
<dbReference type="SMART" id="SM00534">
    <property type="entry name" value="MUTSac"/>
    <property type="match status" value="1"/>
</dbReference>
<dbReference type="SMART" id="SM00533">
    <property type="entry name" value="MUTSd"/>
    <property type="match status" value="1"/>
</dbReference>
<dbReference type="SUPFAM" id="SSF55271">
    <property type="entry name" value="DNA repair protein MutS, domain I"/>
    <property type="match status" value="1"/>
</dbReference>
<dbReference type="SUPFAM" id="SSF53150">
    <property type="entry name" value="DNA repair protein MutS, domain II"/>
    <property type="match status" value="1"/>
</dbReference>
<dbReference type="SUPFAM" id="SSF48334">
    <property type="entry name" value="DNA repair protein MutS, domain III"/>
    <property type="match status" value="1"/>
</dbReference>
<dbReference type="SUPFAM" id="SSF52540">
    <property type="entry name" value="P-loop containing nucleoside triphosphate hydrolases"/>
    <property type="match status" value="1"/>
</dbReference>
<dbReference type="PROSITE" id="PS00486">
    <property type="entry name" value="DNA_MISMATCH_REPAIR_2"/>
    <property type="match status" value="1"/>
</dbReference>
<gene>
    <name evidence="1" type="primary">mutS</name>
    <name type="ordered locus">Syncc9605_0078</name>
</gene>
<feature type="chain" id="PRO_0000335230" description="DNA mismatch repair protein MutS">
    <location>
        <begin position="1"/>
        <end position="903"/>
    </location>
</feature>
<feature type="region of interest" description="Disordered" evidence="2">
    <location>
        <begin position="1"/>
        <end position="89"/>
    </location>
</feature>
<feature type="compositionally biased region" description="Low complexity" evidence="2">
    <location>
        <begin position="20"/>
        <end position="36"/>
    </location>
</feature>
<feature type="compositionally biased region" description="Low complexity" evidence="2">
    <location>
        <begin position="49"/>
        <end position="62"/>
    </location>
</feature>
<feature type="binding site" evidence="1">
    <location>
        <begin position="719"/>
        <end position="726"/>
    </location>
    <ligand>
        <name>ATP</name>
        <dbReference type="ChEBI" id="CHEBI:30616"/>
    </ligand>
</feature>